<protein>
    <recommendedName>
        <fullName evidence="1">Inner membrane-spanning protein YciB</fullName>
    </recommendedName>
</protein>
<accession>Q32GU0</accession>
<organism>
    <name type="scientific">Shigella dysenteriae serotype 1 (strain Sd197)</name>
    <dbReference type="NCBI Taxonomy" id="300267"/>
    <lineage>
        <taxon>Bacteria</taxon>
        <taxon>Pseudomonadati</taxon>
        <taxon>Pseudomonadota</taxon>
        <taxon>Gammaproteobacteria</taxon>
        <taxon>Enterobacterales</taxon>
        <taxon>Enterobacteriaceae</taxon>
        <taxon>Shigella</taxon>
    </lineage>
</organism>
<comment type="function">
    <text evidence="1">Plays a role in cell envelope biogenesis, maintenance of cell envelope integrity and membrane homeostasis.</text>
</comment>
<comment type="subcellular location">
    <subcellularLocation>
        <location evidence="1">Cell inner membrane</location>
        <topology evidence="1">Multi-pass membrane protein</topology>
    </subcellularLocation>
</comment>
<comment type="similarity">
    <text evidence="1">Belongs to the YciB family.</text>
</comment>
<proteinExistence type="inferred from homology"/>
<name>YCIB_SHIDS</name>
<sequence>MKQFLDFLPLVVFFAFYKIYDIYAATTALIVATAIVLIYSWVRFRKVEKMALITFVLVVVFGGLTLFFHNDEFIKWKVTVIYALFAGALLVSQWVMKKPLIQRMLGKELTLPQPVWSKLNLAWAVFFILCGLANIYIAFWLPQNIWVNFKVFGLTALTLIFTLLSGIYIYRHMPQEDKS</sequence>
<gene>
    <name evidence="1" type="primary">yciB</name>
    <name type="ordered locus">SDY_1318</name>
</gene>
<dbReference type="EMBL" id="CP000034">
    <property type="protein sequence ID" value="ABB61465.1"/>
    <property type="molecule type" value="Genomic_DNA"/>
</dbReference>
<dbReference type="RefSeq" id="WP_000808678.1">
    <property type="nucleotide sequence ID" value="NC_007606.1"/>
</dbReference>
<dbReference type="RefSeq" id="YP_402956.1">
    <property type="nucleotide sequence ID" value="NC_007606.1"/>
</dbReference>
<dbReference type="STRING" id="300267.SDY_1318"/>
<dbReference type="EnsemblBacteria" id="ABB61465">
    <property type="protein sequence ID" value="ABB61465"/>
    <property type="gene ID" value="SDY_1318"/>
</dbReference>
<dbReference type="KEGG" id="sdy:SDY_1318"/>
<dbReference type="PATRIC" id="fig|300267.13.peg.1565"/>
<dbReference type="HOGENOM" id="CLU_089554_2_0_6"/>
<dbReference type="Proteomes" id="UP000002716">
    <property type="component" value="Chromosome"/>
</dbReference>
<dbReference type="GO" id="GO:0005886">
    <property type="term" value="C:plasma membrane"/>
    <property type="evidence" value="ECO:0007669"/>
    <property type="project" value="UniProtKB-SubCell"/>
</dbReference>
<dbReference type="HAMAP" id="MF_00189">
    <property type="entry name" value="YciB"/>
    <property type="match status" value="1"/>
</dbReference>
<dbReference type="InterPro" id="IPR006008">
    <property type="entry name" value="YciB"/>
</dbReference>
<dbReference type="NCBIfam" id="TIGR00997">
    <property type="entry name" value="ispZ"/>
    <property type="match status" value="1"/>
</dbReference>
<dbReference type="NCBIfam" id="NF001324">
    <property type="entry name" value="PRK00259.1-2"/>
    <property type="match status" value="1"/>
</dbReference>
<dbReference type="NCBIfam" id="NF001325">
    <property type="entry name" value="PRK00259.1-3"/>
    <property type="match status" value="1"/>
</dbReference>
<dbReference type="NCBIfam" id="NF001326">
    <property type="entry name" value="PRK00259.1-4"/>
    <property type="match status" value="1"/>
</dbReference>
<dbReference type="PANTHER" id="PTHR36917:SF1">
    <property type="entry name" value="INNER MEMBRANE-SPANNING PROTEIN YCIB"/>
    <property type="match status" value="1"/>
</dbReference>
<dbReference type="PANTHER" id="PTHR36917">
    <property type="entry name" value="INTRACELLULAR SEPTATION PROTEIN A-RELATED"/>
    <property type="match status" value="1"/>
</dbReference>
<dbReference type="Pfam" id="PF04279">
    <property type="entry name" value="IspA"/>
    <property type="match status" value="1"/>
</dbReference>
<evidence type="ECO:0000255" key="1">
    <source>
        <dbReference type="HAMAP-Rule" id="MF_00189"/>
    </source>
</evidence>
<keyword id="KW-0997">Cell inner membrane</keyword>
<keyword id="KW-1003">Cell membrane</keyword>
<keyword id="KW-0472">Membrane</keyword>
<keyword id="KW-1185">Reference proteome</keyword>
<keyword id="KW-0812">Transmembrane</keyword>
<keyword id="KW-1133">Transmembrane helix</keyword>
<feature type="chain" id="PRO_1000021065" description="Inner membrane-spanning protein YciB">
    <location>
        <begin position="1"/>
        <end position="179"/>
    </location>
</feature>
<feature type="transmembrane region" description="Helical" evidence="1">
    <location>
        <begin position="22"/>
        <end position="42"/>
    </location>
</feature>
<feature type="transmembrane region" description="Helical" evidence="1">
    <location>
        <begin position="50"/>
        <end position="70"/>
    </location>
</feature>
<feature type="transmembrane region" description="Helical" evidence="1">
    <location>
        <begin position="76"/>
        <end position="96"/>
    </location>
</feature>
<feature type="transmembrane region" description="Helical" evidence="1">
    <location>
        <begin position="121"/>
        <end position="141"/>
    </location>
</feature>
<feature type="transmembrane region" description="Helical" evidence="1">
    <location>
        <begin position="149"/>
        <end position="169"/>
    </location>
</feature>
<reference key="1">
    <citation type="journal article" date="2005" name="Nucleic Acids Res.">
        <title>Genome dynamics and diversity of Shigella species, the etiologic agents of bacillary dysentery.</title>
        <authorList>
            <person name="Yang F."/>
            <person name="Yang J."/>
            <person name="Zhang X."/>
            <person name="Chen L."/>
            <person name="Jiang Y."/>
            <person name="Yan Y."/>
            <person name="Tang X."/>
            <person name="Wang J."/>
            <person name="Xiong Z."/>
            <person name="Dong J."/>
            <person name="Xue Y."/>
            <person name="Zhu Y."/>
            <person name="Xu X."/>
            <person name="Sun L."/>
            <person name="Chen S."/>
            <person name="Nie H."/>
            <person name="Peng J."/>
            <person name="Xu J."/>
            <person name="Wang Y."/>
            <person name="Yuan Z."/>
            <person name="Wen Y."/>
            <person name="Yao Z."/>
            <person name="Shen Y."/>
            <person name="Qiang B."/>
            <person name="Hou Y."/>
            <person name="Yu J."/>
            <person name="Jin Q."/>
        </authorList>
    </citation>
    <scope>NUCLEOTIDE SEQUENCE [LARGE SCALE GENOMIC DNA]</scope>
    <source>
        <strain>Sd197</strain>
    </source>
</reference>